<evidence type="ECO:0000255" key="1">
    <source>
        <dbReference type="HAMAP-Rule" id="MF_00016"/>
    </source>
</evidence>
<feature type="chain" id="PRO_1000201837" description="Holliday junction branch migration complex subunit RuvB">
    <location>
        <begin position="1"/>
        <end position="337"/>
    </location>
</feature>
<feature type="region of interest" description="Large ATPase domain (RuvB-L)" evidence="1">
    <location>
        <begin position="1"/>
        <end position="180"/>
    </location>
</feature>
<feature type="region of interest" description="Small ATPAse domain (RuvB-S)" evidence="1">
    <location>
        <begin position="181"/>
        <end position="251"/>
    </location>
</feature>
<feature type="region of interest" description="Head domain (RuvB-H)" evidence="1">
    <location>
        <begin position="254"/>
        <end position="337"/>
    </location>
</feature>
<feature type="binding site" evidence="1">
    <location>
        <position position="19"/>
    </location>
    <ligand>
        <name>ATP</name>
        <dbReference type="ChEBI" id="CHEBI:30616"/>
    </ligand>
</feature>
<feature type="binding site" evidence="1">
    <location>
        <position position="20"/>
    </location>
    <ligand>
        <name>ATP</name>
        <dbReference type="ChEBI" id="CHEBI:30616"/>
    </ligand>
</feature>
<feature type="binding site" evidence="1">
    <location>
        <position position="61"/>
    </location>
    <ligand>
        <name>ATP</name>
        <dbReference type="ChEBI" id="CHEBI:30616"/>
    </ligand>
</feature>
<feature type="binding site" evidence="1">
    <location>
        <position position="64"/>
    </location>
    <ligand>
        <name>ATP</name>
        <dbReference type="ChEBI" id="CHEBI:30616"/>
    </ligand>
</feature>
<feature type="binding site" evidence="1">
    <location>
        <position position="65"/>
    </location>
    <ligand>
        <name>ATP</name>
        <dbReference type="ChEBI" id="CHEBI:30616"/>
    </ligand>
</feature>
<feature type="binding site" evidence="1">
    <location>
        <position position="65"/>
    </location>
    <ligand>
        <name>Mg(2+)</name>
        <dbReference type="ChEBI" id="CHEBI:18420"/>
    </ligand>
</feature>
<feature type="binding site" evidence="1">
    <location>
        <position position="66"/>
    </location>
    <ligand>
        <name>ATP</name>
        <dbReference type="ChEBI" id="CHEBI:30616"/>
    </ligand>
</feature>
<feature type="binding site" evidence="1">
    <location>
        <begin position="127"/>
        <end position="129"/>
    </location>
    <ligand>
        <name>ATP</name>
        <dbReference type="ChEBI" id="CHEBI:30616"/>
    </ligand>
</feature>
<feature type="binding site" evidence="1">
    <location>
        <position position="170"/>
    </location>
    <ligand>
        <name>ATP</name>
        <dbReference type="ChEBI" id="CHEBI:30616"/>
    </ligand>
</feature>
<feature type="binding site" evidence="1">
    <location>
        <position position="180"/>
    </location>
    <ligand>
        <name>ATP</name>
        <dbReference type="ChEBI" id="CHEBI:30616"/>
    </ligand>
</feature>
<feature type="binding site" evidence="1">
    <location>
        <position position="217"/>
    </location>
    <ligand>
        <name>ATP</name>
        <dbReference type="ChEBI" id="CHEBI:30616"/>
    </ligand>
</feature>
<feature type="binding site" evidence="1">
    <location>
        <position position="309"/>
    </location>
    <ligand>
        <name>DNA</name>
        <dbReference type="ChEBI" id="CHEBI:16991"/>
    </ligand>
</feature>
<feature type="binding site" evidence="1">
    <location>
        <position position="314"/>
    </location>
    <ligand>
        <name>DNA</name>
        <dbReference type="ChEBI" id="CHEBI:16991"/>
    </ligand>
</feature>
<reference key="1">
    <citation type="submission" date="2009-07" db="EMBL/GenBank/DDBJ databases">
        <title>Complete sequence of Geobacter sp. M21.</title>
        <authorList>
            <consortium name="US DOE Joint Genome Institute"/>
            <person name="Lucas S."/>
            <person name="Copeland A."/>
            <person name="Lapidus A."/>
            <person name="Glavina del Rio T."/>
            <person name="Dalin E."/>
            <person name="Tice H."/>
            <person name="Bruce D."/>
            <person name="Goodwin L."/>
            <person name="Pitluck S."/>
            <person name="Saunders E."/>
            <person name="Brettin T."/>
            <person name="Detter J.C."/>
            <person name="Han C."/>
            <person name="Larimer F."/>
            <person name="Land M."/>
            <person name="Hauser L."/>
            <person name="Kyrpides N."/>
            <person name="Ovchinnikova G."/>
            <person name="Lovley D."/>
        </authorList>
    </citation>
    <scope>NUCLEOTIDE SEQUENCE [LARGE SCALE GENOMIC DNA]</scope>
    <source>
        <strain>M21</strain>
    </source>
</reference>
<gene>
    <name evidence="1" type="primary">ruvB</name>
    <name type="ordered locus">GM21_0930</name>
</gene>
<comment type="function">
    <text evidence="1">The RuvA-RuvB-RuvC complex processes Holliday junction (HJ) DNA during genetic recombination and DNA repair, while the RuvA-RuvB complex plays an important role in the rescue of blocked DNA replication forks via replication fork reversal (RFR). RuvA specifically binds to HJ cruciform DNA, conferring on it an open structure. The RuvB hexamer acts as an ATP-dependent pump, pulling dsDNA into and through the RuvAB complex. RuvB forms 2 homohexamers on either side of HJ DNA bound by 1 or 2 RuvA tetramers; 4 subunits per hexamer contact DNA at a time. Coordinated motions by a converter formed by DNA-disengaged RuvB subunits stimulates ATP hydrolysis and nucleotide exchange. Immobilization of the converter enables RuvB to convert the ATP-contained energy into a lever motion, pulling 2 nucleotides of DNA out of the RuvA tetramer per ATP hydrolyzed, thus driving DNA branch migration. The RuvB motors rotate together with the DNA substrate, which together with the progressing nucleotide cycle form the mechanistic basis for DNA recombination by continuous HJ branch migration. Branch migration allows RuvC to scan DNA until it finds its consensus sequence, where it cleaves and resolves cruciform DNA.</text>
</comment>
<comment type="catalytic activity">
    <reaction evidence="1">
        <text>ATP + H2O = ADP + phosphate + H(+)</text>
        <dbReference type="Rhea" id="RHEA:13065"/>
        <dbReference type="ChEBI" id="CHEBI:15377"/>
        <dbReference type="ChEBI" id="CHEBI:15378"/>
        <dbReference type="ChEBI" id="CHEBI:30616"/>
        <dbReference type="ChEBI" id="CHEBI:43474"/>
        <dbReference type="ChEBI" id="CHEBI:456216"/>
    </reaction>
</comment>
<comment type="subunit">
    <text evidence="1">Homohexamer. Forms an RuvA(8)-RuvB(12)-Holliday junction (HJ) complex. HJ DNA is sandwiched between 2 RuvA tetramers; dsDNA enters through RuvA and exits via RuvB. An RuvB hexamer assembles on each DNA strand where it exits the tetramer. Each RuvB hexamer is contacted by two RuvA subunits (via domain III) on 2 adjacent RuvB subunits; this complex drives branch migration. In the full resolvosome a probable DNA-RuvA(4)-RuvB(12)-RuvC(2) complex forms which resolves the HJ.</text>
</comment>
<comment type="subcellular location">
    <subcellularLocation>
        <location evidence="1">Cytoplasm</location>
    </subcellularLocation>
</comment>
<comment type="domain">
    <text evidence="1">Has 3 domains, the large (RuvB-L) and small ATPase (RuvB-S) domains and the C-terminal head (RuvB-H) domain. The head domain binds DNA, while the ATPase domains jointly bind ATP, ADP or are empty depending on the state of the subunit in the translocation cycle. During a single DNA translocation step the structure of each domain remains the same, but their relative positions change.</text>
</comment>
<comment type="similarity">
    <text evidence="1">Belongs to the RuvB family.</text>
</comment>
<keyword id="KW-0067">ATP-binding</keyword>
<keyword id="KW-0963">Cytoplasm</keyword>
<keyword id="KW-0227">DNA damage</keyword>
<keyword id="KW-0233">DNA recombination</keyword>
<keyword id="KW-0234">DNA repair</keyword>
<keyword id="KW-0238">DNA-binding</keyword>
<keyword id="KW-0378">Hydrolase</keyword>
<keyword id="KW-0547">Nucleotide-binding</keyword>
<accession>C6E1S8</accession>
<proteinExistence type="inferred from homology"/>
<name>RUVB_GEOSM</name>
<dbReference type="EC" id="3.6.4.-" evidence="1"/>
<dbReference type="EMBL" id="CP001661">
    <property type="protein sequence ID" value="ACT16997.1"/>
    <property type="molecule type" value="Genomic_DNA"/>
</dbReference>
<dbReference type="SMR" id="C6E1S8"/>
<dbReference type="STRING" id="443144.GM21_0930"/>
<dbReference type="KEGG" id="gem:GM21_0930"/>
<dbReference type="eggNOG" id="COG2255">
    <property type="taxonomic scope" value="Bacteria"/>
</dbReference>
<dbReference type="HOGENOM" id="CLU_055599_1_0_7"/>
<dbReference type="OrthoDB" id="9804478at2"/>
<dbReference type="GO" id="GO:0005737">
    <property type="term" value="C:cytoplasm"/>
    <property type="evidence" value="ECO:0007669"/>
    <property type="project" value="UniProtKB-SubCell"/>
</dbReference>
<dbReference type="GO" id="GO:0048476">
    <property type="term" value="C:Holliday junction resolvase complex"/>
    <property type="evidence" value="ECO:0007669"/>
    <property type="project" value="UniProtKB-UniRule"/>
</dbReference>
<dbReference type="GO" id="GO:0005524">
    <property type="term" value="F:ATP binding"/>
    <property type="evidence" value="ECO:0007669"/>
    <property type="project" value="UniProtKB-UniRule"/>
</dbReference>
<dbReference type="GO" id="GO:0016887">
    <property type="term" value="F:ATP hydrolysis activity"/>
    <property type="evidence" value="ECO:0007669"/>
    <property type="project" value="InterPro"/>
</dbReference>
<dbReference type="GO" id="GO:0000400">
    <property type="term" value="F:four-way junction DNA binding"/>
    <property type="evidence" value="ECO:0007669"/>
    <property type="project" value="UniProtKB-UniRule"/>
</dbReference>
<dbReference type="GO" id="GO:0009378">
    <property type="term" value="F:four-way junction helicase activity"/>
    <property type="evidence" value="ECO:0007669"/>
    <property type="project" value="InterPro"/>
</dbReference>
<dbReference type="GO" id="GO:0006310">
    <property type="term" value="P:DNA recombination"/>
    <property type="evidence" value="ECO:0007669"/>
    <property type="project" value="UniProtKB-UniRule"/>
</dbReference>
<dbReference type="GO" id="GO:0006281">
    <property type="term" value="P:DNA repair"/>
    <property type="evidence" value="ECO:0007669"/>
    <property type="project" value="UniProtKB-UniRule"/>
</dbReference>
<dbReference type="CDD" id="cd00009">
    <property type="entry name" value="AAA"/>
    <property type="match status" value="1"/>
</dbReference>
<dbReference type="FunFam" id="3.40.50.300:FF:000073">
    <property type="entry name" value="Holliday junction ATP-dependent DNA helicase RuvB"/>
    <property type="match status" value="1"/>
</dbReference>
<dbReference type="Gene3D" id="1.10.8.60">
    <property type="match status" value="1"/>
</dbReference>
<dbReference type="Gene3D" id="3.40.50.300">
    <property type="entry name" value="P-loop containing nucleotide triphosphate hydrolases"/>
    <property type="match status" value="1"/>
</dbReference>
<dbReference type="Gene3D" id="1.10.10.10">
    <property type="entry name" value="Winged helix-like DNA-binding domain superfamily/Winged helix DNA-binding domain"/>
    <property type="match status" value="1"/>
</dbReference>
<dbReference type="HAMAP" id="MF_00016">
    <property type="entry name" value="DNA_HJ_migration_RuvB"/>
    <property type="match status" value="1"/>
</dbReference>
<dbReference type="InterPro" id="IPR003593">
    <property type="entry name" value="AAA+_ATPase"/>
</dbReference>
<dbReference type="InterPro" id="IPR041445">
    <property type="entry name" value="AAA_lid_4"/>
</dbReference>
<dbReference type="InterPro" id="IPR004605">
    <property type="entry name" value="DNA_helicase_Holl-junc_RuvB"/>
</dbReference>
<dbReference type="InterPro" id="IPR027417">
    <property type="entry name" value="P-loop_NTPase"/>
</dbReference>
<dbReference type="InterPro" id="IPR008824">
    <property type="entry name" value="RuvB-like_N"/>
</dbReference>
<dbReference type="InterPro" id="IPR008823">
    <property type="entry name" value="RuvB_C"/>
</dbReference>
<dbReference type="InterPro" id="IPR036388">
    <property type="entry name" value="WH-like_DNA-bd_sf"/>
</dbReference>
<dbReference type="InterPro" id="IPR036390">
    <property type="entry name" value="WH_DNA-bd_sf"/>
</dbReference>
<dbReference type="NCBIfam" id="NF000868">
    <property type="entry name" value="PRK00080.1"/>
    <property type="match status" value="1"/>
</dbReference>
<dbReference type="NCBIfam" id="TIGR00635">
    <property type="entry name" value="ruvB"/>
    <property type="match status" value="1"/>
</dbReference>
<dbReference type="PANTHER" id="PTHR42848">
    <property type="match status" value="1"/>
</dbReference>
<dbReference type="PANTHER" id="PTHR42848:SF1">
    <property type="entry name" value="HOLLIDAY JUNCTION BRANCH MIGRATION COMPLEX SUBUNIT RUVB"/>
    <property type="match status" value="1"/>
</dbReference>
<dbReference type="Pfam" id="PF17864">
    <property type="entry name" value="AAA_lid_4"/>
    <property type="match status" value="1"/>
</dbReference>
<dbReference type="Pfam" id="PF05491">
    <property type="entry name" value="RuvB_C"/>
    <property type="match status" value="1"/>
</dbReference>
<dbReference type="Pfam" id="PF05496">
    <property type="entry name" value="RuvB_N"/>
    <property type="match status" value="1"/>
</dbReference>
<dbReference type="SMART" id="SM00382">
    <property type="entry name" value="AAA"/>
    <property type="match status" value="1"/>
</dbReference>
<dbReference type="SUPFAM" id="SSF52540">
    <property type="entry name" value="P-loop containing nucleoside triphosphate hydrolases"/>
    <property type="match status" value="1"/>
</dbReference>
<dbReference type="SUPFAM" id="SSF46785">
    <property type="entry name" value="Winged helix' DNA-binding domain"/>
    <property type="match status" value="1"/>
</dbReference>
<protein>
    <recommendedName>
        <fullName evidence="1">Holliday junction branch migration complex subunit RuvB</fullName>
        <ecNumber evidence="1">3.6.4.-</ecNumber>
    </recommendedName>
</protein>
<organism>
    <name type="scientific">Geobacter sp. (strain M21)</name>
    <dbReference type="NCBI Taxonomy" id="443144"/>
    <lineage>
        <taxon>Bacteria</taxon>
        <taxon>Pseudomonadati</taxon>
        <taxon>Thermodesulfobacteriota</taxon>
        <taxon>Desulfuromonadia</taxon>
        <taxon>Geobacterales</taxon>
        <taxon>Geobacteraceae</taxon>
        <taxon>Geobacter</taxon>
    </lineage>
</organism>
<sequence>MTRLISADKSEDDLLEASLRPRALSDYVGQEKAKGNLGLFIDAARGRGEALDHVLLYGPPGLGKTTLANIIACEMGVNIKSTSGPVIERPGDLAAILTNLEAHDVLFIDEIHRLSHVVEEILYPAMEDFQLDIIIGQGPSARTIKLDLPKFTLVGATTRAGLLSSPLRDRFGVISRLEFYTHDELAFIITRSARIFGMAIAPEGAMELARRSRGTPRIANRLLRRVRDFAQVRADGVITRAVADQALALLEIDEMGFDMMDRAILLTIIDKFGGGPVGLDTIAAAISEESDTIEDVYEPFLIQNGFLNRTPRGRVATAAAYSHFGRIAPEPPQGKLF</sequence>